<keyword id="KW-0251">Elongation factor</keyword>
<keyword id="KW-0342">GTP-binding</keyword>
<keyword id="KW-0496">Mitochondrion</keyword>
<keyword id="KW-0547">Nucleotide-binding</keyword>
<keyword id="KW-0648">Protein biosynthesis</keyword>
<keyword id="KW-1185">Reference proteome</keyword>
<keyword id="KW-0809">Transit peptide</keyword>
<dbReference type="EMBL" id="CH933807">
    <property type="protein sequence ID" value="EDW12666.1"/>
    <property type="molecule type" value="Genomic_DNA"/>
</dbReference>
<dbReference type="SMR" id="B4KKD5"/>
<dbReference type="FunCoup" id="B4KKD5">
    <property type="interactions" value="2134"/>
</dbReference>
<dbReference type="EnsemblMetazoa" id="FBtr0168522">
    <property type="protein sequence ID" value="FBpp0167014"/>
    <property type="gene ID" value="FBgn0140538"/>
</dbReference>
<dbReference type="EnsemblMetazoa" id="XM_002003188.4">
    <property type="protein sequence ID" value="XP_002003224.1"/>
    <property type="gene ID" value="LOC6577257"/>
</dbReference>
<dbReference type="GeneID" id="6577257"/>
<dbReference type="KEGG" id="dmo:Dmoj_GI17797"/>
<dbReference type="CTD" id="34004"/>
<dbReference type="eggNOG" id="KOG0465">
    <property type="taxonomic scope" value="Eukaryota"/>
</dbReference>
<dbReference type="HOGENOM" id="CLU_002794_4_1_1"/>
<dbReference type="InParanoid" id="B4KKD5"/>
<dbReference type="OMA" id="GQFAKVQ"/>
<dbReference type="OrthoDB" id="198619at2759"/>
<dbReference type="PhylomeDB" id="B4KKD5"/>
<dbReference type="UniPathway" id="UPA00345"/>
<dbReference type="Proteomes" id="UP000009192">
    <property type="component" value="Unassembled WGS sequence"/>
</dbReference>
<dbReference type="GO" id="GO:0005739">
    <property type="term" value="C:mitochondrion"/>
    <property type="evidence" value="ECO:0007669"/>
    <property type="project" value="UniProtKB-SubCell"/>
</dbReference>
<dbReference type="GO" id="GO:0005634">
    <property type="term" value="C:nucleus"/>
    <property type="evidence" value="ECO:0007669"/>
    <property type="project" value="EnsemblMetazoa"/>
</dbReference>
<dbReference type="GO" id="GO:0005525">
    <property type="term" value="F:GTP binding"/>
    <property type="evidence" value="ECO:0007669"/>
    <property type="project" value="UniProtKB-UniRule"/>
</dbReference>
<dbReference type="GO" id="GO:0003924">
    <property type="term" value="F:GTPase activity"/>
    <property type="evidence" value="ECO:0000250"/>
    <property type="project" value="UniProtKB"/>
</dbReference>
<dbReference type="GO" id="GO:0003746">
    <property type="term" value="F:translation elongation factor activity"/>
    <property type="evidence" value="ECO:0000250"/>
    <property type="project" value="UniProtKB"/>
</dbReference>
<dbReference type="GO" id="GO:0070125">
    <property type="term" value="P:mitochondrial translational elongation"/>
    <property type="evidence" value="ECO:0000250"/>
    <property type="project" value="UniProtKB"/>
</dbReference>
<dbReference type="CDD" id="cd01886">
    <property type="entry name" value="EF-G"/>
    <property type="match status" value="1"/>
</dbReference>
<dbReference type="CDD" id="cd16262">
    <property type="entry name" value="EFG_III"/>
    <property type="match status" value="1"/>
</dbReference>
<dbReference type="CDD" id="cd01434">
    <property type="entry name" value="EFG_mtEFG1_IV"/>
    <property type="match status" value="1"/>
</dbReference>
<dbReference type="CDD" id="cd04097">
    <property type="entry name" value="mtEFG1_C"/>
    <property type="match status" value="1"/>
</dbReference>
<dbReference type="CDD" id="cd04091">
    <property type="entry name" value="mtEFG1_II_like"/>
    <property type="match status" value="1"/>
</dbReference>
<dbReference type="FunFam" id="3.30.230.10:FF:000003">
    <property type="entry name" value="Elongation factor G"/>
    <property type="match status" value="1"/>
</dbReference>
<dbReference type="FunFam" id="3.30.70.240:FF:000001">
    <property type="entry name" value="Elongation factor G"/>
    <property type="match status" value="1"/>
</dbReference>
<dbReference type="FunFam" id="3.30.70.870:FF:000001">
    <property type="entry name" value="Elongation factor G"/>
    <property type="match status" value="1"/>
</dbReference>
<dbReference type="FunFam" id="2.40.30.10:FF:000022">
    <property type="entry name" value="Elongation factor G, mitochondrial"/>
    <property type="match status" value="1"/>
</dbReference>
<dbReference type="FunFam" id="3.40.50.300:FF:000539">
    <property type="entry name" value="Elongation factor G, mitochondrial"/>
    <property type="match status" value="1"/>
</dbReference>
<dbReference type="Gene3D" id="3.30.230.10">
    <property type="match status" value="1"/>
</dbReference>
<dbReference type="Gene3D" id="3.30.70.240">
    <property type="match status" value="1"/>
</dbReference>
<dbReference type="Gene3D" id="3.30.70.870">
    <property type="entry name" value="Elongation Factor G (Translational Gtpase), domain 3"/>
    <property type="match status" value="1"/>
</dbReference>
<dbReference type="Gene3D" id="3.40.50.300">
    <property type="entry name" value="P-loop containing nucleotide triphosphate hydrolases"/>
    <property type="match status" value="1"/>
</dbReference>
<dbReference type="Gene3D" id="2.40.30.10">
    <property type="entry name" value="Translation factors"/>
    <property type="match status" value="1"/>
</dbReference>
<dbReference type="HAMAP" id="MF_00054_B">
    <property type="entry name" value="EF_G_EF_2_B"/>
    <property type="match status" value="1"/>
</dbReference>
<dbReference type="InterPro" id="IPR041095">
    <property type="entry name" value="EFG_II"/>
</dbReference>
<dbReference type="InterPro" id="IPR009022">
    <property type="entry name" value="EFG_III"/>
</dbReference>
<dbReference type="InterPro" id="IPR035647">
    <property type="entry name" value="EFG_III/V"/>
</dbReference>
<dbReference type="InterPro" id="IPR047872">
    <property type="entry name" value="EFG_IV"/>
</dbReference>
<dbReference type="InterPro" id="IPR035649">
    <property type="entry name" value="EFG_V"/>
</dbReference>
<dbReference type="InterPro" id="IPR000640">
    <property type="entry name" value="EFG_V-like"/>
</dbReference>
<dbReference type="InterPro" id="IPR004161">
    <property type="entry name" value="EFTu-like_2"/>
</dbReference>
<dbReference type="InterPro" id="IPR031157">
    <property type="entry name" value="G_TR_CS"/>
</dbReference>
<dbReference type="InterPro" id="IPR027417">
    <property type="entry name" value="P-loop_NTPase"/>
</dbReference>
<dbReference type="InterPro" id="IPR020568">
    <property type="entry name" value="Ribosomal_Su5_D2-typ_SF"/>
</dbReference>
<dbReference type="InterPro" id="IPR014721">
    <property type="entry name" value="Ribsml_uS5_D2-typ_fold_subgr"/>
</dbReference>
<dbReference type="InterPro" id="IPR005225">
    <property type="entry name" value="Small_GTP-bd"/>
</dbReference>
<dbReference type="InterPro" id="IPR000795">
    <property type="entry name" value="T_Tr_GTP-bd_dom"/>
</dbReference>
<dbReference type="InterPro" id="IPR009000">
    <property type="entry name" value="Transl_B-barrel_sf"/>
</dbReference>
<dbReference type="InterPro" id="IPR004540">
    <property type="entry name" value="Transl_elong_EFG/EF2"/>
</dbReference>
<dbReference type="InterPro" id="IPR005517">
    <property type="entry name" value="Transl_elong_EFG/EF2_IV"/>
</dbReference>
<dbReference type="NCBIfam" id="TIGR00484">
    <property type="entry name" value="EF-G"/>
    <property type="match status" value="1"/>
</dbReference>
<dbReference type="NCBIfam" id="NF009381">
    <property type="entry name" value="PRK12740.1-5"/>
    <property type="match status" value="1"/>
</dbReference>
<dbReference type="NCBIfam" id="TIGR00231">
    <property type="entry name" value="small_GTP"/>
    <property type="match status" value="1"/>
</dbReference>
<dbReference type="PANTHER" id="PTHR43636">
    <property type="entry name" value="ELONGATION FACTOR G, MITOCHONDRIAL"/>
    <property type="match status" value="1"/>
</dbReference>
<dbReference type="PANTHER" id="PTHR43636:SF2">
    <property type="entry name" value="ELONGATION FACTOR G, MITOCHONDRIAL"/>
    <property type="match status" value="1"/>
</dbReference>
<dbReference type="Pfam" id="PF00679">
    <property type="entry name" value="EFG_C"/>
    <property type="match status" value="1"/>
</dbReference>
<dbReference type="Pfam" id="PF14492">
    <property type="entry name" value="EFG_III"/>
    <property type="match status" value="1"/>
</dbReference>
<dbReference type="Pfam" id="PF03764">
    <property type="entry name" value="EFG_IV"/>
    <property type="match status" value="1"/>
</dbReference>
<dbReference type="Pfam" id="PF00009">
    <property type="entry name" value="GTP_EFTU"/>
    <property type="match status" value="1"/>
</dbReference>
<dbReference type="Pfam" id="PF03144">
    <property type="entry name" value="GTP_EFTU_D2"/>
    <property type="match status" value="1"/>
</dbReference>
<dbReference type="PRINTS" id="PR00315">
    <property type="entry name" value="ELONGATNFCT"/>
</dbReference>
<dbReference type="SMART" id="SM00838">
    <property type="entry name" value="EFG_C"/>
    <property type="match status" value="1"/>
</dbReference>
<dbReference type="SMART" id="SM00889">
    <property type="entry name" value="EFG_IV"/>
    <property type="match status" value="1"/>
</dbReference>
<dbReference type="SUPFAM" id="SSF54980">
    <property type="entry name" value="EF-G C-terminal domain-like"/>
    <property type="match status" value="2"/>
</dbReference>
<dbReference type="SUPFAM" id="SSF52540">
    <property type="entry name" value="P-loop containing nucleoside triphosphate hydrolases"/>
    <property type="match status" value="1"/>
</dbReference>
<dbReference type="SUPFAM" id="SSF54211">
    <property type="entry name" value="Ribosomal protein S5 domain 2-like"/>
    <property type="match status" value="1"/>
</dbReference>
<dbReference type="SUPFAM" id="SSF50447">
    <property type="entry name" value="Translation proteins"/>
    <property type="match status" value="1"/>
</dbReference>
<dbReference type="PROSITE" id="PS00301">
    <property type="entry name" value="G_TR_1"/>
    <property type="match status" value="1"/>
</dbReference>
<dbReference type="PROSITE" id="PS51722">
    <property type="entry name" value="G_TR_2"/>
    <property type="match status" value="1"/>
</dbReference>
<organism>
    <name type="scientific">Drosophila mojavensis</name>
    <name type="common">Fruit fly</name>
    <dbReference type="NCBI Taxonomy" id="7230"/>
    <lineage>
        <taxon>Eukaryota</taxon>
        <taxon>Metazoa</taxon>
        <taxon>Ecdysozoa</taxon>
        <taxon>Arthropoda</taxon>
        <taxon>Hexapoda</taxon>
        <taxon>Insecta</taxon>
        <taxon>Pterygota</taxon>
        <taxon>Neoptera</taxon>
        <taxon>Endopterygota</taxon>
        <taxon>Diptera</taxon>
        <taxon>Brachycera</taxon>
        <taxon>Muscomorpha</taxon>
        <taxon>Ephydroidea</taxon>
        <taxon>Drosophilidae</taxon>
        <taxon>Drosophila</taxon>
    </lineage>
</organism>
<name>EFGM_DROMO</name>
<feature type="transit peptide" description="Mitochondrion" evidence="2">
    <location>
        <begin position="1"/>
        <end position="32"/>
    </location>
</feature>
<feature type="chain" id="PRO_0000385548" description="Elongation factor G, mitochondrial">
    <location>
        <begin position="33"/>
        <end position="747"/>
    </location>
</feature>
<feature type="domain" description="tr-type G">
    <location>
        <begin position="42"/>
        <end position="319"/>
    </location>
</feature>
<feature type="binding site" evidence="2">
    <location>
        <begin position="51"/>
        <end position="58"/>
    </location>
    <ligand>
        <name>GTP</name>
        <dbReference type="ChEBI" id="CHEBI:37565"/>
    </ligand>
</feature>
<feature type="binding site" evidence="2">
    <location>
        <begin position="118"/>
        <end position="122"/>
    </location>
    <ligand>
        <name>GTP</name>
        <dbReference type="ChEBI" id="CHEBI:37565"/>
    </ligand>
</feature>
<feature type="binding site" evidence="2">
    <location>
        <begin position="172"/>
        <end position="175"/>
    </location>
    <ligand>
        <name>GTP</name>
        <dbReference type="ChEBI" id="CHEBI:37565"/>
    </ligand>
</feature>
<reference key="1">
    <citation type="journal article" date="2007" name="Nature">
        <title>Evolution of genes and genomes on the Drosophila phylogeny.</title>
        <authorList>
            <consortium name="Drosophila 12 genomes consortium"/>
        </authorList>
    </citation>
    <scope>NUCLEOTIDE SEQUENCE [LARGE SCALE GENOMIC DNA]</scope>
    <source>
        <strain>Tucson 15081-1352.22</strain>
    </source>
</reference>
<sequence length="747" mass="83944">MTLITRVLNGNLPLRLSTLKAARQLQCGYSSHAKYAEHKPIERIRNIGISAHIDSGKTTLTERILFYTGRIAEMHEVRGKDNVGATMDSMELERQRGITIQSAATYTVWKDVNINIIDTPGHVDFTVEVERALRVLDGAVLVLCAVGGVQSQTLTVNRQMKRYNVPCLAFINKLDRMGSNPYRVLSQMRSKLNHNAAFIQLPIGVENNCKGIVDLVQERAIYFEGEHGINLRLDEIPQDMRVESQERRQELIEHLSNADETLGELFLEEKPFTEADIKAALRRTCIKRTFTPVLVGTALKNKGVQPLLDAVVDYLPNPGEVENLAYIEQEGQEKQQIVLNPARDGKDPFMGLAFKLEAGRFGQLTYLRCYQGALRKGDNIYNARNHKKVRIARLVRLHSNQMEDVNEVFAGDIFALFGVDCASGDTFTTNPKNNMSMESIFVPEPVVSMAIKPNNTKDRDNFSKAIARFTKEDPTFHFKFDNDIKETLVSGMGELHLEIYAQRMEREYGCPVTLGKPKVAFRETLVGPCEFDYLHKKQSGGSGQYARIIGVMEPLPPSQNTLLEFVDETVGTNVPKQFVPGVEKGYREMCERGMLSGHKLSGIRFRLQDGGHHIVDSSELAFMLAAHGAVKEVFQNGAWQILEPIMLVEVTAPEEFQGAVMGHLSKRHGIITGTEGTEGWFTVYAEVPLNDMFGYASELRSSTQGKGEFTMEYSRYSPCLPDVQEQIVRQYQESQGLGQPEKKKKKN</sequence>
<protein>
    <recommendedName>
        <fullName evidence="2">Elongation factor G, mitochondrial</fullName>
        <shortName evidence="2">EF-Gmt</shortName>
    </recommendedName>
    <alternativeName>
        <fullName evidence="2">Elongation factor G 1, mitochondrial</fullName>
        <shortName evidence="2">mEF-G 1</shortName>
    </alternativeName>
    <alternativeName>
        <fullName evidence="2">Elongation factor G1</fullName>
    </alternativeName>
</protein>
<proteinExistence type="inferred from homology"/>
<evidence type="ECO:0000250" key="1">
    <source>
        <dbReference type="UniProtKB" id="Q9VM33"/>
    </source>
</evidence>
<evidence type="ECO:0000255" key="2">
    <source>
        <dbReference type="HAMAP-Rule" id="MF_03061"/>
    </source>
</evidence>
<evidence type="ECO:0000305" key="3"/>
<gene>
    <name evidence="1" type="primary">mEFG1</name>
    <name evidence="1" type="synonym">ico</name>
    <name type="ORF">GI17797</name>
</gene>
<comment type="function">
    <text evidence="2">Mitochondrial GTPase that catalyzes the GTP-dependent ribosomal translocation step during translation elongation. During this step, the ribosome changes from the pre-translocational (PRE) to the post-translocational (POST) state as the newly formed A-site-bound peptidyl-tRNA and P-site-bound deacylated tRNA move to the P and E sites, respectively. Catalyzes the coordinated movement of the two tRNA molecules, the mRNA and conformational changes in the ribosome. Essential during development as it acts as a retrograde signal from mitochondria to the nucleus to slow down cell proliferation if mitochondrial energy output is low (By similarity).</text>
</comment>
<comment type="pathway">
    <text evidence="2">Protein biosynthesis; polypeptide chain elongation.</text>
</comment>
<comment type="subcellular location">
    <subcellularLocation>
        <location evidence="2">Mitochondrion</location>
    </subcellularLocation>
</comment>
<comment type="similarity">
    <text evidence="3">Belongs to the TRAFAC class translation factor GTPase superfamily. Classic translation factor GTPase family. EF-G/EF-2 subfamily.</text>
</comment>
<accession>B4KKD5</accession>